<reference key="1">
    <citation type="submission" date="1994-09" db="EMBL/GenBank/DDBJ databases">
        <authorList>
            <person name="Turlin E."/>
            <person name="Gasser F."/>
            <person name="Biville F."/>
        </authorList>
    </citation>
    <scope>NUCLEOTIDE SEQUENCE [GENOMIC DNA]</scope>
    <source>
        <strain>K12</strain>
    </source>
</reference>
<reference key="2">
    <citation type="journal article" date="1997" name="DNA Res.">
        <title>Construction of a contiguous 874-kb sequence of the Escherichia coli-K12 genome corresponding to 50.0-68.8 min on the linkage map and analysis of its sequence features.</title>
        <authorList>
            <person name="Yamamoto Y."/>
            <person name="Aiba H."/>
            <person name="Baba T."/>
            <person name="Hayashi K."/>
            <person name="Inada T."/>
            <person name="Isono K."/>
            <person name="Itoh T."/>
            <person name="Kimura S."/>
            <person name="Kitagawa M."/>
            <person name="Makino K."/>
            <person name="Miki T."/>
            <person name="Mitsuhashi N."/>
            <person name="Mizobuchi K."/>
            <person name="Mori H."/>
            <person name="Nakade S."/>
            <person name="Nakamura Y."/>
            <person name="Nashimoto H."/>
            <person name="Oshima T."/>
            <person name="Oyama S."/>
            <person name="Saito N."/>
            <person name="Sampei G."/>
            <person name="Satoh Y."/>
            <person name="Sivasundaram S."/>
            <person name="Tagami H."/>
            <person name="Takahashi H."/>
            <person name="Takeda J."/>
            <person name="Takemoto K."/>
            <person name="Uehara K."/>
            <person name="Wada C."/>
            <person name="Yamagata S."/>
            <person name="Horiuchi T."/>
        </authorList>
    </citation>
    <scope>NUCLEOTIDE SEQUENCE [LARGE SCALE GENOMIC DNA]</scope>
    <source>
        <strain>K12 / W3110 / ATCC 27325 / DSM 5911</strain>
    </source>
</reference>
<reference key="3">
    <citation type="journal article" date="1997" name="Science">
        <title>The complete genome sequence of Escherichia coli K-12.</title>
        <authorList>
            <person name="Blattner F.R."/>
            <person name="Plunkett G. III"/>
            <person name="Bloch C.A."/>
            <person name="Perna N.T."/>
            <person name="Burland V."/>
            <person name="Riley M."/>
            <person name="Collado-Vides J."/>
            <person name="Glasner J.D."/>
            <person name="Rode C.K."/>
            <person name="Mayhew G.F."/>
            <person name="Gregor J."/>
            <person name="Davis N.W."/>
            <person name="Kirkpatrick H.A."/>
            <person name="Goeden M.A."/>
            <person name="Rose D.J."/>
            <person name="Mau B."/>
            <person name="Shao Y."/>
        </authorList>
    </citation>
    <scope>NUCLEOTIDE SEQUENCE [LARGE SCALE GENOMIC DNA]</scope>
    <source>
        <strain>K12 / MG1655 / ATCC 47076</strain>
    </source>
</reference>
<reference key="4">
    <citation type="journal article" date="2006" name="Mol. Syst. Biol.">
        <title>Highly accurate genome sequences of Escherichia coli K-12 strains MG1655 and W3110.</title>
        <authorList>
            <person name="Hayashi K."/>
            <person name="Morooka N."/>
            <person name="Yamamoto Y."/>
            <person name="Fujita K."/>
            <person name="Isono K."/>
            <person name="Choi S."/>
            <person name="Ohtsubo E."/>
            <person name="Baba T."/>
            <person name="Wanner B.L."/>
            <person name="Mori H."/>
            <person name="Horiuchi T."/>
        </authorList>
    </citation>
    <scope>NUCLEOTIDE SEQUENCE [LARGE SCALE GENOMIC DNA]</scope>
    <source>
        <strain>K12 / W3110 / ATCC 27325 / DSM 5911</strain>
    </source>
</reference>
<reference key="5">
    <citation type="journal article" date="1998" name="J. Bacteriol.">
        <title>Characterization of the hca cluster encoding the dioxygenolytic pathway for initial catabolism of 3-phenylpropionic acid in Escherichia coli K-12.</title>
        <authorList>
            <person name="Diaz E."/>
            <person name="Ferrandez A."/>
            <person name="Garcia J.L."/>
        </authorList>
    </citation>
    <scope>CHARACTERIZATION</scope>
    <source>
        <strain>K12 / MC1061 / ATCC 53338 / DSM 7140</strain>
    </source>
</reference>
<reference key="6">
    <citation type="journal article" date="2012" name="Biotechnol. Bioeng.">
        <title>Identification of a 21 amino acid peptide conferring 3-hydroxypropionic acid stress-tolerance to Escherichia coli.</title>
        <authorList>
            <person name="Warnecke T.E."/>
            <person name="Lynch M.D."/>
            <person name="Lipscomb M.L."/>
            <person name="Gill R.T."/>
        </authorList>
    </citation>
    <scope>CAUTION</scope>
    <source>
        <strain>K12 / MG1655 / ATCC 29425</strain>
    </source>
</reference>
<gene>
    <name type="primary">hcaR</name>
    <name type="synonym">phdR</name>
    <name type="synonym">yfhT</name>
    <name type="ordered locus">b2537</name>
    <name type="ordered locus">JW2521</name>
</gene>
<feature type="chain" id="PRO_0000105631" description="Hca operon transcriptional activator HcaR">
    <location>
        <begin position="1"/>
        <end position="296"/>
    </location>
</feature>
<feature type="domain" description="HTH lysR-type" evidence="1">
    <location>
        <begin position="1"/>
        <end position="58"/>
    </location>
</feature>
<feature type="DNA-binding region" description="H-T-H motif" evidence="1">
    <location>
        <begin position="18"/>
        <end position="38"/>
    </location>
</feature>
<feature type="sequence conflict" description="In Ref. 1; CAA86020." evidence="2" ref="1">
    <original>ITTQQEEKIRRGELD</original>
    <variation>SPRNRRKKFAVVNST</variation>
    <location>
        <begin position="127"/>
        <end position="141"/>
    </location>
</feature>
<feature type="sequence conflict" description="In Ref. 1; CAA86020." evidence="2" ref="1">
    <original>MRHP</original>
    <variation>NCAIH</variation>
    <location>
        <begin position="145"/>
        <end position="148"/>
    </location>
</feature>
<evidence type="ECO:0000255" key="1">
    <source>
        <dbReference type="PROSITE-ProRule" id="PRU00253"/>
    </source>
</evidence>
<evidence type="ECO:0000305" key="2"/>
<evidence type="ECO:0000305" key="3">
    <source>
    </source>
</evidence>
<comment type="function">
    <text>Transcriptional activator of the hca operon for 3-phenylpropionic acid catabolism.</text>
</comment>
<comment type="similarity">
    <text evidence="2">Belongs to the LysR transcriptional regulatory family.</text>
</comment>
<comment type="caution">
    <text evidence="3">The 21 C-terminal amino acids have been proposed to be expressed from an independent promoter within this gene and called IroK. Overexpression of IroK has been suggested to be responsible for 3-hydroxypropionic acid (3-HP) resistance. However the IroK peptide's existence has not been proven, nor has mutagenesis of HcaR itself rather than overexpression of IroK been ruled out as the cause of 3-HP resistance (PubMed:22161628).</text>
</comment>
<name>HCAR_ECOLI</name>
<accession>Q47141</accession>
<accession>P76583</accession>
<accession>P77167</accession>
<organism>
    <name type="scientific">Escherichia coli (strain K12)</name>
    <dbReference type="NCBI Taxonomy" id="83333"/>
    <lineage>
        <taxon>Bacteria</taxon>
        <taxon>Pseudomonadati</taxon>
        <taxon>Pseudomonadota</taxon>
        <taxon>Gammaproteobacteria</taxon>
        <taxon>Enterobacterales</taxon>
        <taxon>Enterobacteriaceae</taxon>
        <taxon>Escherichia</taxon>
    </lineage>
</organism>
<sequence length="296" mass="32838">MELRHLRYFVAVAQALNFTRAAEKLHTSQPSLSSQIRDLENCVGVPLLVRDKRKVALTAAGECFLQDALAILEQAENAKLRARKIVQEDRQLTIGFVPSAEVNLLPKVLPMFRLRQPDTLIELVSLITTQQEEKIRRGELDVGLMRHPVYSPEIDYLELFDEPLVVVLPVDHPLAHEKEITAAQLDGVNFVSTDPVYSGSLAPIVKAWFAQENSQPNIVQVATNILVTMNLVGMGLGVTLIPGYMNNFNTGQVVFRPIAGNVPSIALLMAWKKGEMKPALRDFIAIVQERLASVTA</sequence>
<proteinExistence type="evidence at protein level"/>
<keyword id="KW-0010">Activator</keyword>
<keyword id="KW-0238">DNA-binding</keyword>
<keyword id="KW-1185">Reference proteome</keyword>
<keyword id="KW-0804">Transcription</keyword>
<keyword id="KW-0805">Transcription regulation</keyword>
<protein>
    <recommendedName>
        <fullName>Hca operon transcriptional activator HcaR</fullName>
    </recommendedName>
</protein>
<dbReference type="EMBL" id="Z37966">
    <property type="protein sequence ID" value="CAA86020.1"/>
    <property type="molecule type" value="Genomic_DNA"/>
</dbReference>
<dbReference type="EMBL" id="U00096">
    <property type="protein sequence ID" value="AAC75590.1"/>
    <property type="molecule type" value="Genomic_DNA"/>
</dbReference>
<dbReference type="EMBL" id="AP009048">
    <property type="protein sequence ID" value="BAA16432.2"/>
    <property type="molecule type" value="Genomic_DNA"/>
</dbReference>
<dbReference type="PIR" id="H65030">
    <property type="entry name" value="H65030"/>
</dbReference>
<dbReference type="RefSeq" id="NP_417032.1">
    <property type="nucleotide sequence ID" value="NC_000913.3"/>
</dbReference>
<dbReference type="RefSeq" id="WP_000423261.1">
    <property type="nucleotide sequence ID" value="NZ_STEB01000011.1"/>
</dbReference>
<dbReference type="SMR" id="Q47141"/>
<dbReference type="BioGRID" id="4261574">
    <property type="interactions" value="97"/>
</dbReference>
<dbReference type="FunCoup" id="Q47141">
    <property type="interactions" value="32"/>
</dbReference>
<dbReference type="IntAct" id="Q47141">
    <property type="interactions" value="2"/>
</dbReference>
<dbReference type="STRING" id="511145.b2537"/>
<dbReference type="PaxDb" id="511145-b2537"/>
<dbReference type="EnsemblBacteria" id="AAC75590">
    <property type="protein sequence ID" value="AAC75590"/>
    <property type="gene ID" value="b2537"/>
</dbReference>
<dbReference type="GeneID" id="947000"/>
<dbReference type="KEGG" id="ecj:JW2521"/>
<dbReference type="KEGG" id="eco:b2537"/>
<dbReference type="KEGG" id="ecoc:C3026_14055"/>
<dbReference type="PATRIC" id="fig|1411691.4.peg.4197"/>
<dbReference type="EchoBASE" id="EB3228"/>
<dbReference type="eggNOG" id="COG0583">
    <property type="taxonomic scope" value="Bacteria"/>
</dbReference>
<dbReference type="HOGENOM" id="CLU_039613_6_4_6"/>
<dbReference type="InParanoid" id="Q47141"/>
<dbReference type="OMA" id="WKKNQTF"/>
<dbReference type="OrthoDB" id="5289754at2"/>
<dbReference type="PhylomeDB" id="Q47141"/>
<dbReference type="BioCyc" id="EcoCyc:G7331-MONOMER"/>
<dbReference type="PRO" id="PR:Q47141"/>
<dbReference type="Proteomes" id="UP000000625">
    <property type="component" value="Chromosome"/>
</dbReference>
<dbReference type="GO" id="GO:0032993">
    <property type="term" value="C:protein-DNA complex"/>
    <property type="evidence" value="ECO:0000318"/>
    <property type="project" value="GO_Central"/>
</dbReference>
<dbReference type="GO" id="GO:0003677">
    <property type="term" value="F:DNA binding"/>
    <property type="evidence" value="ECO:0000314"/>
    <property type="project" value="EcoliWiki"/>
</dbReference>
<dbReference type="GO" id="GO:0003700">
    <property type="term" value="F:DNA-binding transcription factor activity"/>
    <property type="evidence" value="ECO:0000314"/>
    <property type="project" value="EcoCyc"/>
</dbReference>
<dbReference type="GO" id="GO:0045892">
    <property type="term" value="P:negative regulation of DNA-templated transcription"/>
    <property type="evidence" value="ECO:0000314"/>
    <property type="project" value="EcoCyc"/>
</dbReference>
<dbReference type="GO" id="GO:0045893">
    <property type="term" value="P:positive regulation of DNA-templated transcription"/>
    <property type="evidence" value="ECO:0000314"/>
    <property type="project" value="EcoCyc"/>
</dbReference>
<dbReference type="GO" id="GO:0006355">
    <property type="term" value="P:regulation of DNA-templated transcription"/>
    <property type="evidence" value="ECO:0000318"/>
    <property type="project" value="GO_Central"/>
</dbReference>
<dbReference type="FunFam" id="1.10.10.10:FF:000001">
    <property type="entry name" value="LysR family transcriptional regulator"/>
    <property type="match status" value="1"/>
</dbReference>
<dbReference type="Gene3D" id="3.40.190.10">
    <property type="entry name" value="Periplasmic binding protein-like II"/>
    <property type="match status" value="2"/>
</dbReference>
<dbReference type="Gene3D" id="1.10.10.10">
    <property type="entry name" value="Winged helix-like DNA-binding domain superfamily/Winged helix DNA-binding domain"/>
    <property type="match status" value="1"/>
</dbReference>
<dbReference type="InterPro" id="IPR005119">
    <property type="entry name" value="LysR_subst-bd"/>
</dbReference>
<dbReference type="InterPro" id="IPR000847">
    <property type="entry name" value="Tscrpt_reg_HTH_LysR"/>
</dbReference>
<dbReference type="InterPro" id="IPR036388">
    <property type="entry name" value="WH-like_DNA-bd_sf"/>
</dbReference>
<dbReference type="InterPro" id="IPR036390">
    <property type="entry name" value="WH_DNA-bd_sf"/>
</dbReference>
<dbReference type="NCBIfam" id="NF007385">
    <property type="entry name" value="PRK09906.1"/>
    <property type="match status" value="1"/>
</dbReference>
<dbReference type="PANTHER" id="PTHR30346:SF0">
    <property type="entry name" value="HCA OPERON TRANSCRIPTIONAL ACTIVATOR HCAR"/>
    <property type="match status" value="1"/>
</dbReference>
<dbReference type="PANTHER" id="PTHR30346">
    <property type="entry name" value="TRANSCRIPTIONAL DUAL REGULATOR HCAR-RELATED"/>
    <property type="match status" value="1"/>
</dbReference>
<dbReference type="Pfam" id="PF00126">
    <property type="entry name" value="HTH_1"/>
    <property type="match status" value="1"/>
</dbReference>
<dbReference type="Pfam" id="PF03466">
    <property type="entry name" value="LysR_substrate"/>
    <property type="match status" value="1"/>
</dbReference>
<dbReference type="PRINTS" id="PR00039">
    <property type="entry name" value="HTHLYSR"/>
</dbReference>
<dbReference type="SUPFAM" id="SSF53850">
    <property type="entry name" value="Periplasmic binding protein-like II"/>
    <property type="match status" value="1"/>
</dbReference>
<dbReference type="SUPFAM" id="SSF46785">
    <property type="entry name" value="Winged helix' DNA-binding domain"/>
    <property type="match status" value="1"/>
</dbReference>
<dbReference type="PROSITE" id="PS50931">
    <property type="entry name" value="HTH_LYSR"/>
    <property type="match status" value="1"/>
</dbReference>